<proteinExistence type="inferred from homology"/>
<dbReference type="EMBL" id="AE014297">
    <property type="protein sequence ID" value="AAF55328.2"/>
    <property type="molecule type" value="Genomic_DNA"/>
</dbReference>
<dbReference type="RefSeq" id="NP_650555.2">
    <property type="nucleotide sequence ID" value="NM_142298.2"/>
</dbReference>
<dbReference type="SMR" id="Q9VEU0"/>
<dbReference type="FunCoup" id="Q9VEU0">
    <property type="interactions" value="24"/>
</dbReference>
<dbReference type="STRING" id="7227.FBpp0088637"/>
<dbReference type="PaxDb" id="7227-FBpp0088637"/>
<dbReference type="EnsemblMetazoa" id="FBtr0089695">
    <property type="protein sequence ID" value="FBpp0088637"/>
    <property type="gene ID" value="FBgn0038440"/>
</dbReference>
<dbReference type="GeneID" id="42007"/>
<dbReference type="KEGG" id="dme:Dmel_CG14901"/>
<dbReference type="UCSC" id="CG14901-RA">
    <property type="organism name" value="d. melanogaster"/>
</dbReference>
<dbReference type="AGR" id="FB:FBgn0038440"/>
<dbReference type="CTD" id="42007"/>
<dbReference type="FlyBase" id="FBgn0038440">
    <property type="gene designation" value="Gr89a"/>
</dbReference>
<dbReference type="VEuPathDB" id="VectorBase:FBgn0038440"/>
<dbReference type="eggNOG" id="ENOG502T92D">
    <property type="taxonomic scope" value="Eukaryota"/>
</dbReference>
<dbReference type="HOGENOM" id="CLU_765640_0_0_1"/>
<dbReference type="InParanoid" id="Q9VEU0"/>
<dbReference type="OMA" id="AMNFIVI"/>
<dbReference type="OrthoDB" id="8039669at2759"/>
<dbReference type="PhylomeDB" id="Q9VEU0"/>
<dbReference type="BioGRID-ORCS" id="42007">
    <property type="hits" value="0 hits in 1 CRISPR screen"/>
</dbReference>
<dbReference type="GenomeRNAi" id="42007"/>
<dbReference type="PRO" id="PR:Q9VEU0"/>
<dbReference type="Proteomes" id="UP000000803">
    <property type="component" value="Chromosome 3R"/>
</dbReference>
<dbReference type="Bgee" id="FBgn0038440">
    <property type="expression patterns" value="Expressed in nociceptive neuron in imaginal disc-derived wing and 8 other cell types or tissues"/>
</dbReference>
<dbReference type="ExpressionAtlas" id="Q9VEU0">
    <property type="expression patterns" value="baseline and differential"/>
</dbReference>
<dbReference type="GO" id="GO:0030424">
    <property type="term" value="C:axon"/>
    <property type="evidence" value="ECO:0000318"/>
    <property type="project" value="GO_Central"/>
</dbReference>
<dbReference type="GO" id="GO:0030425">
    <property type="term" value="C:dendrite"/>
    <property type="evidence" value="ECO:0000318"/>
    <property type="project" value="GO_Central"/>
</dbReference>
<dbReference type="GO" id="GO:0016020">
    <property type="term" value="C:membrane"/>
    <property type="evidence" value="ECO:0000255"/>
    <property type="project" value="FlyBase"/>
</dbReference>
<dbReference type="GO" id="GO:0043025">
    <property type="term" value="C:neuronal cell body"/>
    <property type="evidence" value="ECO:0000318"/>
    <property type="project" value="GO_Central"/>
</dbReference>
<dbReference type="GO" id="GO:0005886">
    <property type="term" value="C:plasma membrane"/>
    <property type="evidence" value="ECO:0000250"/>
    <property type="project" value="FlyBase"/>
</dbReference>
<dbReference type="GO" id="GO:0015276">
    <property type="term" value="F:ligand-gated monoatomic ion channel activity"/>
    <property type="evidence" value="ECO:0000250"/>
    <property type="project" value="FlyBase"/>
</dbReference>
<dbReference type="GO" id="GO:0008527">
    <property type="term" value="F:taste receptor activity"/>
    <property type="evidence" value="ECO:0000250"/>
    <property type="project" value="FlyBase"/>
</dbReference>
<dbReference type="GO" id="GO:0050912">
    <property type="term" value="P:detection of chemical stimulus involved in sensory perception of taste"/>
    <property type="evidence" value="ECO:0000250"/>
    <property type="project" value="FlyBase"/>
</dbReference>
<dbReference type="GO" id="GO:0034220">
    <property type="term" value="P:monoatomic ion transmembrane transport"/>
    <property type="evidence" value="ECO:0000250"/>
    <property type="project" value="FlyBase"/>
</dbReference>
<dbReference type="GO" id="GO:0007165">
    <property type="term" value="P:signal transduction"/>
    <property type="evidence" value="ECO:0007669"/>
    <property type="project" value="UniProtKB-KW"/>
</dbReference>
<dbReference type="InterPro" id="IPR013604">
    <property type="entry name" value="7TM_chemorcpt"/>
</dbReference>
<dbReference type="Pfam" id="PF08395">
    <property type="entry name" value="7tm_7"/>
    <property type="match status" value="1"/>
</dbReference>
<organism evidence="5">
    <name type="scientific">Drosophila melanogaster</name>
    <name type="common">Fruit fly</name>
    <dbReference type="NCBI Taxonomy" id="7227"/>
    <lineage>
        <taxon>Eukaryota</taxon>
        <taxon>Metazoa</taxon>
        <taxon>Ecdysozoa</taxon>
        <taxon>Arthropoda</taxon>
        <taxon>Hexapoda</taxon>
        <taxon>Insecta</taxon>
        <taxon>Pterygota</taxon>
        <taxon>Neoptera</taxon>
        <taxon>Endopterygota</taxon>
        <taxon>Diptera</taxon>
        <taxon>Brachycera</taxon>
        <taxon>Muscomorpha</taxon>
        <taxon>Ephydroidea</taxon>
        <taxon>Drosophilidae</taxon>
        <taxon>Drosophila</taxon>
        <taxon>Sophophora</taxon>
    </lineage>
</organism>
<feature type="chain" id="PRO_0000216539" description="Putative gustatory receptor 89a">
    <location>
        <begin position="1"/>
        <end position="362"/>
    </location>
</feature>
<feature type="topological domain" description="Cytoplasmic" evidence="1">
    <location>
        <begin position="1"/>
        <end position="38"/>
    </location>
</feature>
<feature type="transmembrane region" description="Helical; Name=1" evidence="2">
    <location>
        <begin position="39"/>
        <end position="59"/>
    </location>
</feature>
<feature type="topological domain" description="Extracellular" evidence="1">
    <location>
        <begin position="60"/>
        <end position="74"/>
    </location>
</feature>
<feature type="transmembrane region" description="Helical; Name=2" evidence="2">
    <location>
        <begin position="75"/>
        <end position="95"/>
    </location>
</feature>
<feature type="topological domain" description="Cytoplasmic" evidence="1">
    <location>
        <begin position="96"/>
        <end position="126"/>
    </location>
</feature>
<feature type="transmembrane region" description="Helical; Name=3" evidence="2">
    <location>
        <begin position="127"/>
        <end position="147"/>
    </location>
</feature>
<feature type="topological domain" description="Extracellular" evidence="1">
    <location>
        <begin position="148"/>
        <end position="166"/>
    </location>
</feature>
<feature type="transmembrane region" description="Helical; Name=4" evidence="2">
    <location>
        <begin position="167"/>
        <end position="187"/>
    </location>
</feature>
<feature type="topological domain" description="Cytoplasmic" evidence="1">
    <location>
        <begin position="188"/>
        <end position="223"/>
    </location>
</feature>
<feature type="transmembrane region" description="Helical; Name=5" evidence="2">
    <location>
        <begin position="224"/>
        <end position="244"/>
    </location>
</feature>
<feature type="topological domain" description="Extracellular" evidence="1">
    <location>
        <begin position="245"/>
        <end position="255"/>
    </location>
</feature>
<feature type="transmembrane region" description="Helical; Name=6" evidence="2">
    <location>
        <begin position="256"/>
        <end position="276"/>
    </location>
</feature>
<feature type="topological domain" description="Cytoplasmic" evidence="1">
    <location>
        <begin position="277"/>
        <end position="333"/>
    </location>
</feature>
<feature type="transmembrane region" description="Helical; Name=7" evidence="2">
    <location>
        <begin position="334"/>
        <end position="354"/>
    </location>
</feature>
<feature type="topological domain" description="Extracellular" evidence="1">
    <location>
        <begin position="355"/>
        <end position="362"/>
    </location>
</feature>
<reference evidence="4" key="1">
    <citation type="journal article" date="2000" name="Science">
        <title>The genome sequence of Drosophila melanogaster.</title>
        <authorList>
            <person name="Adams M.D."/>
            <person name="Celniker S.E."/>
            <person name="Holt R.A."/>
            <person name="Evans C.A."/>
            <person name="Gocayne J.D."/>
            <person name="Amanatides P.G."/>
            <person name="Scherer S.E."/>
            <person name="Li P.W."/>
            <person name="Hoskins R.A."/>
            <person name="Galle R.F."/>
            <person name="George R.A."/>
            <person name="Lewis S.E."/>
            <person name="Richards S."/>
            <person name="Ashburner M."/>
            <person name="Henderson S.N."/>
            <person name="Sutton G.G."/>
            <person name="Wortman J.R."/>
            <person name="Yandell M.D."/>
            <person name="Zhang Q."/>
            <person name="Chen L.X."/>
            <person name="Brandon R.C."/>
            <person name="Rogers Y.-H.C."/>
            <person name="Blazej R.G."/>
            <person name="Champe M."/>
            <person name="Pfeiffer B.D."/>
            <person name="Wan K.H."/>
            <person name="Doyle C."/>
            <person name="Baxter E.G."/>
            <person name="Helt G."/>
            <person name="Nelson C.R."/>
            <person name="Miklos G.L.G."/>
            <person name="Abril J.F."/>
            <person name="Agbayani A."/>
            <person name="An H.-J."/>
            <person name="Andrews-Pfannkoch C."/>
            <person name="Baldwin D."/>
            <person name="Ballew R.M."/>
            <person name="Basu A."/>
            <person name="Baxendale J."/>
            <person name="Bayraktaroglu L."/>
            <person name="Beasley E.M."/>
            <person name="Beeson K.Y."/>
            <person name="Benos P.V."/>
            <person name="Berman B.P."/>
            <person name="Bhandari D."/>
            <person name="Bolshakov S."/>
            <person name="Borkova D."/>
            <person name="Botchan M.R."/>
            <person name="Bouck J."/>
            <person name="Brokstein P."/>
            <person name="Brottier P."/>
            <person name="Burtis K.C."/>
            <person name="Busam D.A."/>
            <person name="Butler H."/>
            <person name="Cadieu E."/>
            <person name="Center A."/>
            <person name="Chandra I."/>
            <person name="Cherry J.M."/>
            <person name="Cawley S."/>
            <person name="Dahlke C."/>
            <person name="Davenport L.B."/>
            <person name="Davies P."/>
            <person name="de Pablos B."/>
            <person name="Delcher A."/>
            <person name="Deng Z."/>
            <person name="Mays A.D."/>
            <person name="Dew I."/>
            <person name="Dietz S.M."/>
            <person name="Dodson K."/>
            <person name="Doup L.E."/>
            <person name="Downes M."/>
            <person name="Dugan-Rocha S."/>
            <person name="Dunkov B.C."/>
            <person name="Dunn P."/>
            <person name="Durbin K.J."/>
            <person name="Evangelista C.C."/>
            <person name="Ferraz C."/>
            <person name="Ferriera S."/>
            <person name="Fleischmann W."/>
            <person name="Fosler C."/>
            <person name="Gabrielian A.E."/>
            <person name="Garg N.S."/>
            <person name="Gelbart W.M."/>
            <person name="Glasser K."/>
            <person name="Glodek A."/>
            <person name="Gong F."/>
            <person name="Gorrell J.H."/>
            <person name="Gu Z."/>
            <person name="Guan P."/>
            <person name="Harris M."/>
            <person name="Harris N.L."/>
            <person name="Harvey D.A."/>
            <person name="Heiman T.J."/>
            <person name="Hernandez J.R."/>
            <person name="Houck J."/>
            <person name="Hostin D."/>
            <person name="Houston K.A."/>
            <person name="Howland T.J."/>
            <person name="Wei M.-H."/>
            <person name="Ibegwam C."/>
            <person name="Jalali M."/>
            <person name="Kalush F."/>
            <person name="Karpen G.H."/>
            <person name="Ke Z."/>
            <person name="Kennison J.A."/>
            <person name="Ketchum K.A."/>
            <person name="Kimmel B.E."/>
            <person name="Kodira C.D."/>
            <person name="Kraft C.L."/>
            <person name="Kravitz S."/>
            <person name="Kulp D."/>
            <person name="Lai Z."/>
            <person name="Lasko P."/>
            <person name="Lei Y."/>
            <person name="Levitsky A.A."/>
            <person name="Li J.H."/>
            <person name="Li Z."/>
            <person name="Liang Y."/>
            <person name="Lin X."/>
            <person name="Liu X."/>
            <person name="Mattei B."/>
            <person name="McIntosh T.C."/>
            <person name="McLeod M.P."/>
            <person name="McPherson D."/>
            <person name="Merkulov G."/>
            <person name="Milshina N.V."/>
            <person name="Mobarry C."/>
            <person name="Morris J."/>
            <person name="Moshrefi A."/>
            <person name="Mount S.M."/>
            <person name="Moy M."/>
            <person name="Murphy B."/>
            <person name="Murphy L."/>
            <person name="Muzny D.M."/>
            <person name="Nelson D.L."/>
            <person name="Nelson D.R."/>
            <person name="Nelson K.A."/>
            <person name="Nixon K."/>
            <person name="Nusskern D.R."/>
            <person name="Pacleb J.M."/>
            <person name="Palazzolo M."/>
            <person name="Pittman G.S."/>
            <person name="Pan S."/>
            <person name="Pollard J."/>
            <person name="Puri V."/>
            <person name="Reese M.G."/>
            <person name="Reinert K."/>
            <person name="Remington K."/>
            <person name="Saunders R.D.C."/>
            <person name="Scheeler F."/>
            <person name="Shen H."/>
            <person name="Shue B.C."/>
            <person name="Siden-Kiamos I."/>
            <person name="Simpson M."/>
            <person name="Skupski M.P."/>
            <person name="Smith T.J."/>
            <person name="Spier E."/>
            <person name="Spradling A.C."/>
            <person name="Stapleton M."/>
            <person name="Strong R."/>
            <person name="Sun E."/>
            <person name="Svirskas R."/>
            <person name="Tector C."/>
            <person name="Turner R."/>
            <person name="Venter E."/>
            <person name="Wang A.H."/>
            <person name="Wang X."/>
            <person name="Wang Z.-Y."/>
            <person name="Wassarman D.A."/>
            <person name="Weinstock G.M."/>
            <person name="Weissenbach J."/>
            <person name="Williams S.M."/>
            <person name="Woodage T."/>
            <person name="Worley K.C."/>
            <person name="Wu D."/>
            <person name="Yang S."/>
            <person name="Yao Q.A."/>
            <person name="Ye J."/>
            <person name="Yeh R.-F."/>
            <person name="Zaveri J.S."/>
            <person name="Zhan M."/>
            <person name="Zhang G."/>
            <person name="Zhao Q."/>
            <person name="Zheng L."/>
            <person name="Zheng X.H."/>
            <person name="Zhong F.N."/>
            <person name="Zhong W."/>
            <person name="Zhou X."/>
            <person name="Zhu S.C."/>
            <person name="Zhu X."/>
            <person name="Smith H.O."/>
            <person name="Gibbs R.A."/>
            <person name="Myers E.W."/>
            <person name="Rubin G.M."/>
            <person name="Venter J.C."/>
        </authorList>
    </citation>
    <scope>NUCLEOTIDE SEQUENCE [LARGE SCALE GENOMIC DNA]</scope>
    <source>
        <strain evidence="3">Berkeley</strain>
    </source>
</reference>
<reference evidence="4" key="2">
    <citation type="journal article" date="2002" name="Genome Biol.">
        <title>Annotation of the Drosophila melanogaster euchromatic genome: a systematic review.</title>
        <authorList>
            <person name="Misra S."/>
            <person name="Crosby M.A."/>
            <person name="Mungall C.J."/>
            <person name="Matthews B.B."/>
            <person name="Campbell K.S."/>
            <person name="Hradecky P."/>
            <person name="Huang Y."/>
            <person name="Kaminker J.S."/>
            <person name="Millburn G.H."/>
            <person name="Prochnik S.E."/>
            <person name="Smith C.D."/>
            <person name="Tupy J.L."/>
            <person name="Whitfield E.J."/>
            <person name="Bayraktaroglu L."/>
            <person name="Berman B.P."/>
            <person name="Bettencourt B.R."/>
            <person name="Celniker S.E."/>
            <person name="de Grey A.D.N.J."/>
            <person name="Drysdale R.A."/>
            <person name="Harris N.L."/>
            <person name="Richter J."/>
            <person name="Russo S."/>
            <person name="Schroeder A.J."/>
            <person name="Shu S.Q."/>
            <person name="Stapleton M."/>
            <person name="Yamada C."/>
            <person name="Ashburner M."/>
            <person name="Gelbart W.M."/>
            <person name="Rubin G.M."/>
            <person name="Lewis S.E."/>
        </authorList>
    </citation>
    <scope>GENOME REANNOTATION</scope>
    <source>
        <strain>Berkeley</strain>
    </source>
</reference>
<evidence type="ECO:0000250" key="1"/>
<evidence type="ECO:0000255" key="2"/>
<evidence type="ECO:0000269" key="3">
    <source>
    </source>
</evidence>
<evidence type="ECO:0000305" key="4"/>
<evidence type="ECO:0000312" key="5">
    <source>
        <dbReference type="EMBL" id="AAF55328.2"/>
    </source>
</evidence>
<keyword id="KW-1003">Cell membrane</keyword>
<keyword id="KW-0472">Membrane</keyword>
<keyword id="KW-0675">Receptor</keyword>
<keyword id="KW-1185">Reference proteome</keyword>
<keyword id="KW-0807">Transducer</keyword>
<keyword id="KW-0812">Transmembrane</keyword>
<keyword id="KW-1133">Transmembrane helix</keyword>
<name>GR89A_DROME</name>
<sequence length="362" mass="41634">MLRFPHVCGLCLLLKYWQILALAPFRTSEPMVARCQRWMTLIAVFRWLLLTSMAPFVLWKSAAMYEATNVRHSMVFKTIALATMTGDVCISLALLGNHLWNRRELANLVNDLARLHRRRRLSWWSTLFLWLKLLLSLYDLLCSVPFLKGAGGRLPWSQLVAYGVQLYFQHVASVYGNGIFGGILLMLECYNQLEREEPTNLARLLQKEYSWLRLIQRFVKLFQLGIFLLVLGSFVNIMVNIYAFMSYYVSLHGVPLTISNNCLVLAIQLYAVILAAHLCQVRSAKLRKKCLQLEYVPEGLTQEQAMASTPFPVLTPTGNVKFRILGVFILDNSFWLFLVSYAMNFIVVILQTSFEHINHGEI</sequence>
<protein>
    <recommendedName>
        <fullName>Putative gustatory receptor 89a</fullName>
    </recommendedName>
</protein>
<comment type="function">
    <text evidence="1">Probable gustatory receptor which mediates acceptance or avoidance behavior, depending on its substrates.</text>
</comment>
<comment type="subcellular location">
    <subcellularLocation>
        <location evidence="1">Cell membrane</location>
        <topology evidence="1">Multi-pass membrane protein</topology>
    </subcellularLocation>
</comment>
<comment type="similarity">
    <text evidence="4">Belongs to the insect chemoreceptor superfamily. Gustatory receptor (GR) family. Gr77a subfamily.</text>
</comment>
<gene>
    <name type="primary">Gr89a</name>
    <name type="ORF">CG14901</name>
</gene>
<accession>Q9VEU0</accession>